<dbReference type="EMBL" id="D00047">
    <property type="protein sequence ID" value="BAA00032.1"/>
    <property type="molecule type" value="mRNA"/>
</dbReference>
<dbReference type="EMBL" id="X04721">
    <property type="protein sequence ID" value="CAA28430.1"/>
    <property type="molecule type" value="Genomic_RNA"/>
</dbReference>
<dbReference type="EMBL" id="D10029">
    <property type="protein sequence ID" value="BAA00922.1"/>
    <property type="molecule type" value="mRNA"/>
</dbReference>
<dbReference type="EMBL" id="M14932">
    <property type="protein sequence ID" value="AAA66819.1"/>
    <property type="molecule type" value="Genomic_RNA"/>
</dbReference>
<dbReference type="EMBL" id="M14890">
    <property type="protein sequence ID" value="AAA46867.1"/>
    <property type="molecule type" value="Genomic_RNA"/>
</dbReference>
<dbReference type="PIR" id="B24189">
    <property type="entry name" value="MNNZP4"/>
</dbReference>
<dbReference type="PIR" id="B27010">
    <property type="entry name" value="MNNZP3"/>
</dbReference>
<dbReference type="SMR" id="P06165"/>
<dbReference type="GO" id="GO:0052170">
    <property type="term" value="P:symbiont-mediated suppression of host innate immune response"/>
    <property type="evidence" value="ECO:0007669"/>
    <property type="project" value="UniProtKB-KW"/>
</dbReference>
<dbReference type="GO" id="GO:0039563">
    <property type="term" value="P:symbiont-mediated suppression of host JAK-STAT cascade via inhibition of STAT1 activity"/>
    <property type="evidence" value="ECO:0000250"/>
    <property type="project" value="UniProtKB"/>
</dbReference>
<dbReference type="GO" id="GO:0039564">
    <property type="term" value="P:symbiont-mediated suppression of host JAK-STAT cascade via inhibition of STAT2 activity"/>
    <property type="evidence" value="ECO:0007669"/>
    <property type="project" value="UniProtKB-KW"/>
</dbReference>
<dbReference type="GO" id="GO:0039502">
    <property type="term" value="P:symbiont-mediated suppression of host type I interferon-mediated signaling pathway"/>
    <property type="evidence" value="ECO:0007669"/>
    <property type="project" value="UniProtKB-KW"/>
</dbReference>
<dbReference type="InterPro" id="IPR002608">
    <property type="entry name" value="Paramyxo_C"/>
</dbReference>
<dbReference type="Pfam" id="PF01692">
    <property type="entry name" value="Paramyxo_C"/>
    <property type="match status" value="1"/>
</dbReference>
<accession>P06165</accession>
<name>C_PI3H4</name>
<sequence>MLKTIKSWILGKRNQEINQLISPRPSTSLNSYSAPTPKKTYRKTTQSTQEPSNSAPPSVNQKSNQQKQVKKLVDQLTKIDSLGHHTNVQQKQKIEILIRKLYREDLGEEAAQIVELRLWSLEESLEASQILKMEPKTRRILISMKLERWIRTLLRGKCDNLQMFQARYQEVMSYLQQNKVETVIMEEAWNLSVHLIQDQ</sequence>
<keyword id="KW-0945">Host-virus interaction</keyword>
<keyword id="KW-1090">Inhibition of host innate immune response by virus</keyword>
<keyword id="KW-1114">Inhibition of host interferon signaling pathway by virus</keyword>
<keyword id="KW-1105">Inhibition of host STAT1 by virus</keyword>
<keyword id="KW-1106">Inhibition of host STAT2 by virus</keyword>
<keyword id="KW-0922">Interferon antiviral system evasion</keyword>
<keyword id="KW-0899">Viral immunoevasion</keyword>
<gene>
    <name type="primary">P/V/C</name>
</gene>
<protein>
    <recommendedName>
        <fullName>Protein C</fullName>
    </recommendedName>
    <alternativeName>
        <fullName>VP18 protein</fullName>
    </alternativeName>
</protein>
<reference key="1">
    <citation type="journal article" date="1986" name="Virology">
        <title>Messenger RNA encoding the phosphoprotein (P) gene of human parainfluenza virus 3 is bicistronic.</title>
        <authorList>
            <person name="Luk D."/>
            <person name="Sanchez A."/>
            <person name="Banerjee A.K."/>
        </authorList>
    </citation>
    <scope>NUCLEOTIDE SEQUENCE</scope>
</reference>
<reference key="2">
    <citation type="journal article" date="1987" name="Virology">
        <authorList>
            <person name="Luk D."/>
            <person name="Sanchez A."/>
            <person name="Banerjee A.K."/>
        </authorList>
    </citation>
    <scope>ERRATUM OF PUBMED:3016995</scope>
    <scope>SEQUENCE REVISION</scope>
</reference>
<reference key="3">
    <citation type="journal article" date="1986" name="Virology">
        <title>Molecular cloning and sequence analysis of the human parainfluenza 3 virus mRNA encoding the P and C proteins.</title>
        <authorList>
            <person name="Galinski M.S."/>
            <person name="Mink M.A."/>
            <person name="Lambert D.M."/>
            <person name="Wechsler S.L."/>
            <person name="Pons W.M."/>
        </authorList>
    </citation>
    <scope>NUCLEOTIDE SEQUENCE</scope>
</reference>
<reference key="4">
    <citation type="journal article" date="1986" name="J. Gen. Virol.">
        <title>Sequence analysis of the P and C protein genes of human parainfluenza virus type 3: patterns of amino acid sequence homology among paramyxovirus proteins.</title>
        <authorList>
            <person name="Spriggs M.K."/>
            <person name="Collins P.L."/>
        </authorList>
    </citation>
    <scope>NUCLEOTIDE SEQUENCE</scope>
</reference>
<proteinExistence type="evidence at transcript level"/>
<organism>
    <name type="scientific">Human parainfluenza 3 virus (strain Wash/47885/57)</name>
    <name type="common">HPIV-3</name>
    <name type="synonym">Human parainfluenza 3 virus (strain NIH 47885)</name>
    <dbReference type="NCBI Taxonomy" id="11217"/>
    <lineage>
        <taxon>Viruses</taxon>
        <taxon>Riboviria</taxon>
        <taxon>Orthornavirae</taxon>
        <taxon>Negarnaviricota</taxon>
        <taxon>Haploviricotina</taxon>
        <taxon>Monjiviricetes</taxon>
        <taxon>Mononegavirales</taxon>
        <taxon>Paramyxoviridae</taxon>
        <taxon>Feraresvirinae</taxon>
        <taxon>Respirovirus</taxon>
        <taxon>Respirovirus pneumoniae</taxon>
    </lineage>
</organism>
<comment type="similarity">
    <text evidence="2">Belongs to the respirovirus protein C family.</text>
</comment>
<organismHost>
    <name type="scientific">Homo sapiens</name>
    <name type="common">Human</name>
    <dbReference type="NCBI Taxonomy" id="9606"/>
</organismHost>
<evidence type="ECO:0000256" key="1">
    <source>
        <dbReference type="SAM" id="MobiDB-lite"/>
    </source>
</evidence>
<evidence type="ECO:0000305" key="2"/>
<feature type="chain" id="PRO_0000142803" description="Protein C">
    <location>
        <begin position="1"/>
        <end position="199"/>
    </location>
</feature>
<feature type="region of interest" description="Disordered" evidence="1">
    <location>
        <begin position="19"/>
        <end position="67"/>
    </location>
</feature>
<feature type="compositionally biased region" description="Polar residues" evidence="1">
    <location>
        <begin position="19"/>
        <end position="34"/>
    </location>
</feature>
<feature type="compositionally biased region" description="Polar residues" evidence="1">
    <location>
        <begin position="43"/>
        <end position="57"/>
    </location>
</feature>
<feature type="compositionally biased region" description="Low complexity" evidence="1">
    <location>
        <begin position="58"/>
        <end position="67"/>
    </location>
</feature>
<feature type="sequence conflict" description="In Ref. 2 and 3." evidence="2" ref="2 3">
    <original>K</original>
    <variation>N</variation>
    <location>
        <position position="93"/>
    </location>
</feature>
<feature type="sequence conflict" description="In Ref. 4; CAA28430." evidence="2" ref="4">
    <original>HL</original>
    <variation>QM</variation>
    <location>
        <begin position="194"/>
        <end position="195"/>
    </location>
</feature>